<dbReference type="EMBL" id="AM114193">
    <property type="protein sequence ID" value="CAJ35353.1"/>
    <property type="molecule type" value="Genomic_DNA"/>
</dbReference>
<dbReference type="RefSeq" id="WP_012037139.1">
    <property type="nucleotide sequence ID" value="NC_009464.1"/>
</dbReference>
<dbReference type="SMR" id="Q0W8E0"/>
<dbReference type="STRING" id="351160.LRC391"/>
<dbReference type="GeneID" id="5144583"/>
<dbReference type="KEGG" id="rci:LRC391"/>
<dbReference type="PATRIC" id="fig|351160.9.peg.2894"/>
<dbReference type="eggNOG" id="arCOG02199">
    <property type="taxonomic scope" value="Archaea"/>
</dbReference>
<dbReference type="OrthoDB" id="35401at2157"/>
<dbReference type="UniPathway" id="UPA00070">
    <property type="reaction ID" value="UER00945"/>
</dbReference>
<dbReference type="Proteomes" id="UP000000663">
    <property type="component" value="Chromosome"/>
</dbReference>
<dbReference type="GO" id="GO:0051537">
    <property type="term" value="F:2 iron, 2 sulfur cluster binding"/>
    <property type="evidence" value="ECO:0007669"/>
    <property type="project" value="UniProtKB-KW"/>
</dbReference>
<dbReference type="GO" id="GO:0009055">
    <property type="term" value="F:electron transfer activity"/>
    <property type="evidence" value="ECO:0007669"/>
    <property type="project" value="UniProtKB-UniRule"/>
</dbReference>
<dbReference type="GO" id="GO:0050660">
    <property type="term" value="F:flavin adenine dinucleotide binding"/>
    <property type="evidence" value="ECO:0007669"/>
    <property type="project" value="InterPro"/>
</dbReference>
<dbReference type="GO" id="GO:0046872">
    <property type="term" value="F:metal ion binding"/>
    <property type="evidence" value="ECO:0007669"/>
    <property type="project" value="UniProtKB-KW"/>
</dbReference>
<dbReference type="GO" id="GO:0016491">
    <property type="term" value="F:oxidoreductase activity"/>
    <property type="evidence" value="ECO:0007669"/>
    <property type="project" value="InterPro"/>
</dbReference>
<dbReference type="GO" id="GO:0044205">
    <property type="term" value="P:'de novo' UMP biosynthetic process"/>
    <property type="evidence" value="ECO:0007669"/>
    <property type="project" value="UniProtKB-UniRule"/>
</dbReference>
<dbReference type="CDD" id="cd06220">
    <property type="entry name" value="DHOD_e_trans_like2"/>
    <property type="match status" value="1"/>
</dbReference>
<dbReference type="Gene3D" id="2.10.240.10">
    <property type="entry name" value="Dihydroorotate dehydrogenase, electron transfer subunit"/>
    <property type="match status" value="1"/>
</dbReference>
<dbReference type="Gene3D" id="3.40.50.80">
    <property type="entry name" value="Nucleotide-binding domain of ferredoxin-NADP reductase (FNR) module"/>
    <property type="match status" value="1"/>
</dbReference>
<dbReference type="Gene3D" id="2.40.30.10">
    <property type="entry name" value="Translation factors"/>
    <property type="match status" value="1"/>
</dbReference>
<dbReference type="HAMAP" id="MF_01211">
    <property type="entry name" value="DHODB_Fe_S_bind"/>
    <property type="match status" value="1"/>
</dbReference>
<dbReference type="InterPro" id="IPR012165">
    <property type="entry name" value="Cyt_c3_hydrogenase_gsu"/>
</dbReference>
<dbReference type="InterPro" id="IPR037117">
    <property type="entry name" value="Dihydroorotate_DH_ele_sf"/>
</dbReference>
<dbReference type="InterPro" id="IPR019480">
    <property type="entry name" value="Dihydroorotate_DH_Fe-S-bd"/>
</dbReference>
<dbReference type="InterPro" id="IPR023455">
    <property type="entry name" value="Dihydroorotate_DHASE_ETsu"/>
</dbReference>
<dbReference type="InterPro" id="IPR017927">
    <property type="entry name" value="FAD-bd_FR_type"/>
</dbReference>
<dbReference type="InterPro" id="IPR039261">
    <property type="entry name" value="FNR_nucleotide-bd"/>
</dbReference>
<dbReference type="InterPro" id="IPR001433">
    <property type="entry name" value="OxRdtase_FAD/NAD-bd"/>
</dbReference>
<dbReference type="InterPro" id="IPR050353">
    <property type="entry name" value="PyrK_electron_transfer"/>
</dbReference>
<dbReference type="InterPro" id="IPR017938">
    <property type="entry name" value="Riboflavin_synthase-like_b-brl"/>
</dbReference>
<dbReference type="NCBIfam" id="NF000796">
    <property type="entry name" value="PRK00054.1-1"/>
    <property type="match status" value="1"/>
</dbReference>
<dbReference type="PANTHER" id="PTHR43513">
    <property type="entry name" value="DIHYDROOROTATE DEHYDROGENASE B (NAD(+)), ELECTRON TRANSFER SUBUNIT"/>
    <property type="match status" value="1"/>
</dbReference>
<dbReference type="PANTHER" id="PTHR43513:SF3">
    <property type="entry name" value="DIHYDROOROTATE DEHYDROGENASE B (NAD(+)), ELECTRON TRANSFER SUBUNIT-RELATED"/>
    <property type="match status" value="1"/>
</dbReference>
<dbReference type="Pfam" id="PF10418">
    <property type="entry name" value="DHODB_Fe-S_bind"/>
    <property type="match status" value="1"/>
</dbReference>
<dbReference type="Pfam" id="PF00175">
    <property type="entry name" value="NAD_binding_1"/>
    <property type="match status" value="1"/>
</dbReference>
<dbReference type="PIRSF" id="PIRSF006816">
    <property type="entry name" value="Cyc3_hyd_g"/>
    <property type="match status" value="1"/>
</dbReference>
<dbReference type="SUPFAM" id="SSF52343">
    <property type="entry name" value="Ferredoxin reductase-like, C-terminal NADP-linked domain"/>
    <property type="match status" value="1"/>
</dbReference>
<dbReference type="SUPFAM" id="SSF63380">
    <property type="entry name" value="Riboflavin synthase domain-like"/>
    <property type="match status" value="1"/>
</dbReference>
<dbReference type="PROSITE" id="PS00197">
    <property type="entry name" value="2FE2S_FER_1"/>
    <property type="match status" value="1"/>
</dbReference>
<dbReference type="PROSITE" id="PS51384">
    <property type="entry name" value="FAD_FR"/>
    <property type="match status" value="1"/>
</dbReference>
<protein>
    <recommendedName>
        <fullName evidence="1">Probable dihydroorotate dehydrogenase B (NAD(+)), electron transfer subunit</fullName>
    </recommendedName>
    <alternativeName>
        <fullName evidence="1">Dihydroorotate oxidase B, electron transfer subunit</fullName>
    </alternativeName>
</protein>
<reference key="1">
    <citation type="journal article" date="2006" name="Science">
        <title>Genome of rice cluster I archaea -- the key methane producers in the rice rhizosphere.</title>
        <authorList>
            <person name="Erkel C."/>
            <person name="Kube M."/>
            <person name="Reinhardt R."/>
            <person name="Liesack W."/>
        </authorList>
    </citation>
    <scope>NUCLEOTIDE SEQUENCE [LARGE SCALE GENOMIC DNA]</scope>
    <source>
        <strain>DSM 22066 / NBRC 105507 / MRE50</strain>
    </source>
</reference>
<proteinExistence type="inferred from homology"/>
<feature type="chain" id="PRO_1000066409" description="Probable dihydroorotate dehydrogenase B (NAD(+)), electron transfer subunit">
    <location>
        <begin position="1"/>
        <end position="258"/>
    </location>
</feature>
<feature type="domain" description="FAD-binding FR-type" evidence="1">
    <location>
        <begin position="1"/>
        <end position="90"/>
    </location>
</feature>
<feature type="binding site" evidence="1">
    <location>
        <position position="210"/>
    </location>
    <ligand>
        <name>[2Fe-2S] cluster</name>
        <dbReference type="ChEBI" id="CHEBI:190135"/>
    </ligand>
</feature>
<feature type="binding site" evidence="1">
    <location>
        <position position="215"/>
    </location>
    <ligand>
        <name>[2Fe-2S] cluster</name>
        <dbReference type="ChEBI" id="CHEBI:190135"/>
    </ligand>
</feature>
<feature type="binding site" evidence="1">
    <location>
        <position position="218"/>
    </location>
    <ligand>
        <name>[2Fe-2S] cluster</name>
        <dbReference type="ChEBI" id="CHEBI:190135"/>
    </ligand>
</feature>
<feature type="binding site" evidence="1">
    <location>
        <position position="228"/>
    </location>
    <ligand>
        <name>[2Fe-2S] cluster</name>
        <dbReference type="ChEBI" id="CHEBI:190135"/>
    </ligand>
</feature>
<evidence type="ECO:0000255" key="1">
    <source>
        <dbReference type="HAMAP-Rule" id="MF_01211"/>
    </source>
</evidence>
<organism>
    <name type="scientific">Methanocella arvoryzae (strain DSM 22066 / NBRC 105507 / MRE50)</name>
    <dbReference type="NCBI Taxonomy" id="351160"/>
    <lineage>
        <taxon>Archaea</taxon>
        <taxon>Methanobacteriati</taxon>
        <taxon>Methanobacteriota</taxon>
        <taxon>Stenosarchaea group</taxon>
        <taxon>Methanomicrobia</taxon>
        <taxon>Methanocellales</taxon>
        <taxon>Methanocellaceae</taxon>
        <taxon>Methanocella</taxon>
    </lineage>
</organism>
<accession>Q0W8E0</accession>
<sequence length="258" mass="28246">MRPISATIKEIIDETPTIKTFRLDVDDWLHGKPGQYVMVWIRGVDEVPMTLSYDNAITVQKVGEATEALFKLKAGDSVGIRGPYGNGWEIVGDDILLISGGVGSAPLAPLGEKARRIGVNVTTLAGYRTKEEVHFEDRYRAAGELVVATDDGTYGKKGYVTDLLKSVDLKKFTQIYCCGPEKMMYRVLCALDEAGVAGLSQFSLQRYIKCGIGVCGSCCMDPDGLRVCRDGPVFDGETLLRSEMGKYARDASGRRQQI</sequence>
<gene>
    <name evidence="1" type="primary">pyrK</name>
    <name type="ordered locus">UNCMA_28240</name>
    <name type="ORF">LRC391</name>
</gene>
<comment type="function">
    <text evidence="1">Responsible for channeling the electrons from the oxidation of dihydroorotate from the FMN redox center in the PyrD type B subunit to the ultimate electron acceptor NAD(+).</text>
</comment>
<comment type="cofactor">
    <cofactor evidence="1">
        <name>[2Fe-2S] cluster</name>
        <dbReference type="ChEBI" id="CHEBI:190135"/>
    </cofactor>
    <text evidence="1">Binds 1 [2Fe-2S] cluster per subunit.</text>
</comment>
<comment type="cofactor">
    <cofactor evidence="1">
        <name>FAD</name>
        <dbReference type="ChEBI" id="CHEBI:57692"/>
    </cofactor>
    <text evidence="1">Binds 1 FAD per subunit.</text>
</comment>
<comment type="pathway">
    <text evidence="1">Pyrimidine metabolism; UMP biosynthesis via de novo pathway; orotate from (S)-dihydroorotate (NAD(+) route): step 1/1.</text>
</comment>
<comment type="subunit">
    <text evidence="1">Heterotetramer of 2 PyrK and 2 PyrD type B subunits.</text>
</comment>
<comment type="similarity">
    <text evidence="1">Belongs to the PyrK family.</text>
</comment>
<name>PYRK_METAR</name>
<keyword id="KW-0001">2Fe-2S</keyword>
<keyword id="KW-0249">Electron transport</keyword>
<keyword id="KW-0274">FAD</keyword>
<keyword id="KW-0285">Flavoprotein</keyword>
<keyword id="KW-0408">Iron</keyword>
<keyword id="KW-0411">Iron-sulfur</keyword>
<keyword id="KW-0479">Metal-binding</keyword>
<keyword id="KW-0665">Pyrimidine biosynthesis</keyword>
<keyword id="KW-1185">Reference proteome</keyword>
<keyword id="KW-0813">Transport</keyword>